<sequence>MVCLPCIFLPIMMAIYMKFIMPYVYRFLPERWVHFLDPILYPTCPMKIPEQEKKEEEEEKEKSCCSTEAENTTEVTTETKKDQ</sequence>
<dbReference type="EMBL" id="HE601438">
    <property type="protein sequence ID" value="CAP23787.1"/>
    <property type="molecule type" value="Genomic_DNA"/>
</dbReference>
<dbReference type="RefSeq" id="XP_002631039.1">
    <property type="nucleotide sequence ID" value="XM_002630993.1"/>
</dbReference>
<dbReference type="FunCoup" id="A8WTH5">
    <property type="interactions" value="1028"/>
</dbReference>
<dbReference type="EnsemblMetazoa" id="CBG02799.1">
    <property type="protein sequence ID" value="CBG02799.1"/>
    <property type="gene ID" value="WBGene00025781"/>
</dbReference>
<dbReference type="GeneID" id="8572553"/>
<dbReference type="KEGG" id="cbr:CBG_02799"/>
<dbReference type="CTD" id="8572553"/>
<dbReference type="WormBase" id="CBG02799">
    <property type="protein sequence ID" value="CBP06343"/>
    <property type="gene ID" value="WBGene00025781"/>
</dbReference>
<dbReference type="eggNOG" id="ENOG502SDMH">
    <property type="taxonomic scope" value="Eukaryota"/>
</dbReference>
<dbReference type="HOGENOM" id="CLU_2624360_0_0_1"/>
<dbReference type="InParanoid" id="A8WTH5"/>
<dbReference type="OMA" id="MAIYMKF"/>
<dbReference type="OrthoDB" id="10062823at2759"/>
<dbReference type="Proteomes" id="UP000008549">
    <property type="component" value="Unassembled WGS sequence"/>
</dbReference>
<dbReference type="InterPro" id="IPR026776">
    <property type="entry name" value="UPF0729_C18orf32-like"/>
</dbReference>
<dbReference type="PANTHER" id="PTHR13456">
    <property type="entry name" value="UPF0729 PROTEIN C18ORF32"/>
    <property type="match status" value="1"/>
</dbReference>
<dbReference type="PANTHER" id="PTHR13456:SF0">
    <property type="entry name" value="UPF0729 PROTEIN C18ORF32"/>
    <property type="match status" value="1"/>
</dbReference>
<comment type="similarity">
    <text evidence="2">Belongs to the UPF0729 family.</text>
</comment>
<proteinExistence type="inferred from homology"/>
<keyword id="KW-1185">Reference proteome</keyword>
<organism>
    <name type="scientific">Caenorhabditis briggsae</name>
    <dbReference type="NCBI Taxonomy" id="6238"/>
    <lineage>
        <taxon>Eukaryota</taxon>
        <taxon>Metazoa</taxon>
        <taxon>Ecdysozoa</taxon>
        <taxon>Nematoda</taxon>
        <taxon>Chromadorea</taxon>
        <taxon>Rhabditida</taxon>
        <taxon>Rhabditina</taxon>
        <taxon>Rhabditomorpha</taxon>
        <taxon>Rhabditoidea</taxon>
        <taxon>Rhabditidae</taxon>
        <taxon>Peloderinae</taxon>
        <taxon>Caenorhabditis</taxon>
    </lineage>
</organism>
<reference key="1">
    <citation type="journal article" date="2003" name="PLoS Biol.">
        <title>The genome sequence of Caenorhabditis briggsae: a platform for comparative genomics.</title>
        <authorList>
            <person name="Stein L.D."/>
            <person name="Bao Z."/>
            <person name="Blasiar D."/>
            <person name="Blumenthal T."/>
            <person name="Brent M.R."/>
            <person name="Chen N."/>
            <person name="Chinwalla A."/>
            <person name="Clarke L."/>
            <person name="Clee C."/>
            <person name="Coghlan A."/>
            <person name="Coulson A."/>
            <person name="D'Eustachio P."/>
            <person name="Fitch D.H.A."/>
            <person name="Fulton L.A."/>
            <person name="Fulton R.E."/>
            <person name="Griffiths-Jones S."/>
            <person name="Harris T.W."/>
            <person name="Hillier L.W."/>
            <person name="Kamath R."/>
            <person name="Kuwabara P.E."/>
            <person name="Mardis E.R."/>
            <person name="Marra M.A."/>
            <person name="Miner T.L."/>
            <person name="Minx P."/>
            <person name="Mullikin J.C."/>
            <person name="Plumb R.W."/>
            <person name="Rogers J."/>
            <person name="Schein J.E."/>
            <person name="Sohrmann M."/>
            <person name="Spieth J."/>
            <person name="Stajich J.E."/>
            <person name="Wei C."/>
            <person name="Willey D."/>
            <person name="Wilson R.K."/>
            <person name="Durbin R.M."/>
            <person name="Waterston R.H."/>
        </authorList>
    </citation>
    <scope>NUCLEOTIDE SEQUENCE [LARGE SCALE GENOMIC DNA]</scope>
    <source>
        <strain>AF16</strain>
    </source>
</reference>
<evidence type="ECO:0000256" key="1">
    <source>
        <dbReference type="SAM" id="MobiDB-lite"/>
    </source>
</evidence>
<evidence type="ECO:0000305" key="2"/>
<protein>
    <recommendedName>
        <fullName>UPF0729 protein CBG02799</fullName>
    </recommendedName>
</protein>
<gene>
    <name type="ORF">CBG02799</name>
</gene>
<accession>A8WTH5</accession>
<feature type="chain" id="PRO_0000390360" description="UPF0729 protein CBG02799">
    <location>
        <begin position="1"/>
        <end position="83"/>
    </location>
</feature>
<feature type="region of interest" description="Disordered" evidence="1">
    <location>
        <begin position="51"/>
        <end position="83"/>
    </location>
</feature>
<feature type="compositionally biased region" description="Low complexity" evidence="1">
    <location>
        <begin position="67"/>
        <end position="76"/>
    </location>
</feature>
<name>U729_CAEBR</name>